<protein>
    <recommendedName>
        <fullName evidence="1">Probable lipid kinase YegS</fullName>
        <ecNumber evidence="1">2.7.1.-</ecNumber>
    </recommendedName>
</protein>
<reference key="1">
    <citation type="journal article" date="2006" name="BMC Genomics">
        <title>Complete genome sequence of Shigella flexneri 5b and comparison with Shigella flexneri 2a.</title>
        <authorList>
            <person name="Nie H."/>
            <person name="Yang F."/>
            <person name="Zhang X."/>
            <person name="Yang J."/>
            <person name="Chen L."/>
            <person name="Wang J."/>
            <person name="Xiong Z."/>
            <person name="Peng J."/>
            <person name="Sun L."/>
            <person name="Dong J."/>
            <person name="Xue Y."/>
            <person name="Xu X."/>
            <person name="Chen S."/>
            <person name="Yao Z."/>
            <person name="Shen Y."/>
            <person name="Jin Q."/>
        </authorList>
    </citation>
    <scope>NUCLEOTIDE SEQUENCE [LARGE SCALE GENOMIC DNA]</scope>
    <source>
        <strain>8401</strain>
    </source>
</reference>
<sequence length="299" mass="31972">MAEFPASLLILNGKSTDNLPLREAIMLLREEGMTIHVRVTWEKGDAARFVEEARKLGVATVIAGGGDGTINEVSTALIQCEGDDIPALGILPLGTANDFATSVGIPEALDKALKLAIAGNAIAIDMAQVNKQTCFINMATGGFGTRITTETPEKLKAALGGVSYIIHGLMRMDTLQPDRCEIRGENFHWQGDALVIGIGNGRQAGGGQQLCPNALINDGLLQLRIFTGDEILPALVSTLKSDEDNPNIIEGASSWFDIQAPHEITFNLDGEPLSGQNFHIEILPAALRCRLPPDCPLLR</sequence>
<gene>
    <name evidence="1" type="primary">yegS</name>
    <name type="ordered locus">SFV_2144</name>
</gene>
<name>YEGS_SHIF8</name>
<feature type="chain" id="PRO_0000292161" description="Probable lipid kinase YegS">
    <location>
        <begin position="1"/>
        <end position="299"/>
    </location>
</feature>
<feature type="domain" description="DAGKc" evidence="1">
    <location>
        <begin position="2"/>
        <end position="133"/>
    </location>
</feature>
<feature type="active site" description="Proton acceptor" evidence="1">
    <location>
        <position position="271"/>
    </location>
</feature>
<feature type="binding site" evidence="1">
    <location>
        <position position="40"/>
    </location>
    <ligand>
        <name>ATP</name>
        <dbReference type="ChEBI" id="CHEBI:30616"/>
    </ligand>
</feature>
<feature type="binding site" evidence="1">
    <location>
        <begin position="66"/>
        <end position="72"/>
    </location>
    <ligand>
        <name>ATP</name>
        <dbReference type="ChEBI" id="CHEBI:30616"/>
    </ligand>
</feature>
<feature type="binding site" evidence="1">
    <location>
        <position position="95"/>
    </location>
    <ligand>
        <name>ATP</name>
        <dbReference type="ChEBI" id="CHEBI:30616"/>
    </ligand>
</feature>
<feature type="binding site" evidence="1">
    <location>
        <position position="215"/>
    </location>
    <ligand>
        <name>Mg(2+)</name>
        <dbReference type="ChEBI" id="CHEBI:18420"/>
    </ligand>
</feature>
<feature type="binding site" evidence="1">
    <location>
        <position position="218"/>
    </location>
    <ligand>
        <name>Mg(2+)</name>
        <dbReference type="ChEBI" id="CHEBI:18420"/>
    </ligand>
</feature>
<feature type="binding site" evidence="1">
    <location>
        <position position="220"/>
    </location>
    <ligand>
        <name>Mg(2+)</name>
        <dbReference type="ChEBI" id="CHEBI:18420"/>
    </ligand>
</feature>
<keyword id="KW-0067">ATP-binding</keyword>
<keyword id="KW-0963">Cytoplasm</keyword>
<keyword id="KW-0418">Kinase</keyword>
<keyword id="KW-0444">Lipid biosynthesis</keyword>
<keyword id="KW-0443">Lipid metabolism</keyword>
<keyword id="KW-0460">Magnesium</keyword>
<keyword id="KW-0479">Metal-binding</keyword>
<keyword id="KW-0547">Nucleotide-binding</keyword>
<keyword id="KW-0594">Phospholipid biosynthesis</keyword>
<keyword id="KW-1208">Phospholipid metabolism</keyword>
<keyword id="KW-0808">Transferase</keyword>
<organism>
    <name type="scientific">Shigella flexneri serotype 5b (strain 8401)</name>
    <dbReference type="NCBI Taxonomy" id="373384"/>
    <lineage>
        <taxon>Bacteria</taxon>
        <taxon>Pseudomonadati</taxon>
        <taxon>Pseudomonadota</taxon>
        <taxon>Gammaproteobacteria</taxon>
        <taxon>Enterobacterales</taxon>
        <taxon>Enterobacteriaceae</taxon>
        <taxon>Shigella</taxon>
    </lineage>
</organism>
<dbReference type="EC" id="2.7.1.-" evidence="1"/>
<dbReference type="EMBL" id="CP000266">
    <property type="protein sequence ID" value="ABF04268.1"/>
    <property type="molecule type" value="Genomic_DNA"/>
</dbReference>
<dbReference type="RefSeq" id="WP_000807346.1">
    <property type="nucleotide sequence ID" value="NC_008258.1"/>
</dbReference>
<dbReference type="SMR" id="Q0T347"/>
<dbReference type="KEGG" id="sfv:SFV_2144"/>
<dbReference type="HOGENOM" id="CLU_045532_1_1_6"/>
<dbReference type="Proteomes" id="UP000000659">
    <property type="component" value="Chromosome"/>
</dbReference>
<dbReference type="GO" id="GO:0005737">
    <property type="term" value="C:cytoplasm"/>
    <property type="evidence" value="ECO:0007669"/>
    <property type="project" value="UniProtKB-SubCell"/>
</dbReference>
<dbReference type="GO" id="GO:0005886">
    <property type="term" value="C:plasma membrane"/>
    <property type="evidence" value="ECO:0007669"/>
    <property type="project" value="TreeGrafter"/>
</dbReference>
<dbReference type="GO" id="GO:0005524">
    <property type="term" value="F:ATP binding"/>
    <property type="evidence" value="ECO:0007669"/>
    <property type="project" value="UniProtKB-UniRule"/>
</dbReference>
<dbReference type="GO" id="GO:0001727">
    <property type="term" value="F:lipid kinase activity"/>
    <property type="evidence" value="ECO:0007669"/>
    <property type="project" value="UniProtKB-UniRule"/>
</dbReference>
<dbReference type="GO" id="GO:0000287">
    <property type="term" value="F:magnesium ion binding"/>
    <property type="evidence" value="ECO:0007669"/>
    <property type="project" value="UniProtKB-UniRule"/>
</dbReference>
<dbReference type="GO" id="GO:0008654">
    <property type="term" value="P:phospholipid biosynthetic process"/>
    <property type="evidence" value="ECO:0007669"/>
    <property type="project" value="UniProtKB-UniRule"/>
</dbReference>
<dbReference type="FunFam" id="2.60.200.40:FF:000008">
    <property type="entry name" value="Probable lipid kinase YegS"/>
    <property type="match status" value="1"/>
</dbReference>
<dbReference type="FunFam" id="3.40.50.10330:FF:000008">
    <property type="entry name" value="Probable lipid kinase YegS"/>
    <property type="match status" value="1"/>
</dbReference>
<dbReference type="Gene3D" id="2.60.200.40">
    <property type="match status" value="1"/>
</dbReference>
<dbReference type="Gene3D" id="3.40.50.10330">
    <property type="entry name" value="Probable inorganic polyphosphate/atp-NAD kinase, domain 1"/>
    <property type="match status" value="1"/>
</dbReference>
<dbReference type="HAMAP" id="MF_01377">
    <property type="entry name" value="YegS"/>
    <property type="match status" value="1"/>
</dbReference>
<dbReference type="InterPro" id="IPR017438">
    <property type="entry name" value="ATP-NAD_kinase_N"/>
</dbReference>
<dbReference type="InterPro" id="IPR005218">
    <property type="entry name" value="Diacylglycerol/lipid_kinase"/>
</dbReference>
<dbReference type="InterPro" id="IPR001206">
    <property type="entry name" value="Diacylglycerol_kinase_cat_dom"/>
</dbReference>
<dbReference type="InterPro" id="IPR022433">
    <property type="entry name" value="Lip_kinase_YegS"/>
</dbReference>
<dbReference type="InterPro" id="IPR050187">
    <property type="entry name" value="Lipid_Phosphate_FormReg"/>
</dbReference>
<dbReference type="InterPro" id="IPR016064">
    <property type="entry name" value="NAD/diacylglycerol_kinase_sf"/>
</dbReference>
<dbReference type="InterPro" id="IPR045540">
    <property type="entry name" value="YegS/DAGK_C"/>
</dbReference>
<dbReference type="NCBIfam" id="TIGR03702">
    <property type="entry name" value="lip_kinase_YegS"/>
    <property type="match status" value="1"/>
</dbReference>
<dbReference type="NCBIfam" id="NF009602">
    <property type="entry name" value="PRK13054.1"/>
    <property type="match status" value="1"/>
</dbReference>
<dbReference type="NCBIfam" id="TIGR00147">
    <property type="entry name" value="YegS/Rv2252/BmrU family lipid kinase"/>
    <property type="match status" value="1"/>
</dbReference>
<dbReference type="PANTHER" id="PTHR12358:SF106">
    <property type="entry name" value="LIPID KINASE YEGS"/>
    <property type="match status" value="1"/>
</dbReference>
<dbReference type="PANTHER" id="PTHR12358">
    <property type="entry name" value="SPHINGOSINE KINASE"/>
    <property type="match status" value="1"/>
</dbReference>
<dbReference type="Pfam" id="PF00781">
    <property type="entry name" value="DAGK_cat"/>
    <property type="match status" value="1"/>
</dbReference>
<dbReference type="Pfam" id="PF19279">
    <property type="entry name" value="YegS_C"/>
    <property type="match status" value="1"/>
</dbReference>
<dbReference type="SMART" id="SM00046">
    <property type="entry name" value="DAGKc"/>
    <property type="match status" value="1"/>
</dbReference>
<dbReference type="SUPFAM" id="SSF111331">
    <property type="entry name" value="NAD kinase/diacylglycerol kinase-like"/>
    <property type="match status" value="1"/>
</dbReference>
<dbReference type="PROSITE" id="PS50146">
    <property type="entry name" value="DAGK"/>
    <property type="match status" value="1"/>
</dbReference>
<accession>Q0T347</accession>
<comment type="function">
    <text evidence="1">Probably phosphorylates lipids; the in vivo substrate is unknown.</text>
</comment>
<comment type="cofactor">
    <cofactor evidence="1">
        <name>Mg(2+)</name>
        <dbReference type="ChEBI" id="CHEBI:18420"/>
    </cofactor>
    <cofactor evidence="1">
        <name>Ca(2+)</name>
        <dbReference type="ChEBI" id="CHEBI:29108"/>
    </cofactor>
    <text evidence="1">Binds 1 Mg(2+) ion per subunit. Ca(2+) may be able to substitute.</text>
</comment>
<comment type="subcellular location">
    <subcellularLocation>
        <location evidence="1">Cytoplasm</location>
    </subcellularLocation>
</comment>
<comment type="similarity">
    <text evidence="1">Belongs to the diacylglycerol/lipid kinase family. YegS lipid kinase subfamily.</text>
</comment>
<proteinExistence type="inferred from homology"/>
<evidence type="ECO:0000255" key="1">
    <source>
        <dbReference type="HAMAP-Rule" id="MF_01377"/>
    </source>
</evidence>